<reference key="1">
    <citation type="journal article" date="1983" name="J. Biol. Chem.">
        <title>Isolation and characterization of two major serum proteins from the dogfish, Mustelus canis, C-reactive protein and amyloid P component.</title>
        <authorList>
            <person name="Robey F.A."/>
            <person name="Tanaka T."/>
            <person name="Liu T.-Y."/>
        </authorList>
    </citation>
    <scope>PROTEIN SEQUENCE</scope>
</reference>
<evidence type="ECO:0000305" key="1"/>
<dbReference type="PIR" id="B20569">
    <property type="entry name" value="B20569"/>
</dbReference>
<dbReference type="GO" id="GO:0005576">
    <property type="term" value="C:extracellular region"/>
    <property type="evidence" value="ECO:0007669"/>
    <property type="project" value="UniProtKB-SubCell"/>
</dbReference>
<dbReference type="GO" id="GO:0030246">
    <property type="term" value="F:carbohydrate binding"/>
    <property type="evidence" value="ECO:0007669"/>
    <property type="project" value="UniProtKB-KW"/>
</dbReference>
<proteinExistence type="evidence at protein level"/>
<organism>
    <name type="scientific">Mustelus canis</name>
    <name type="common">Smooth dogfish</name>
    <name type="synonym">Squalus canis</name>
    <dbReference type="NCBI Taxonomy" id="7812"/>
    <lineage>
        <taxon>Eukaryota</taxon>
        <taxon>Metazoa</taxon>
        <taxon>Chordata</taxon>
        <taxon>Craniata</taxon>
        <taxon>Vertebrata</taxon>
        <taxon>Chondrichthyes</taxon>
        <taxon>Elasmobranchii</taxon>
        <taxon>Galeomorphii</taxon>
        <taxon>Galeoidea</taxon>
        <taxon>Carcharhiniformes</taxon>
        <taxon>Triakidae</taxon>
        <taxon>Mustelus</taxon>
    </lineage>
</organism>
<name>SAMP_MUSCA</name>
<feature type="chain" id="PRO_0000162504" description="Serum amyloid P-component">
    <location>
        <begin position="1"/>
        <end position="9" status="greater than"/>
    </location>
</feature>
<feature type="domain" description="Pentraxin (PTX)">
    <location>
        <begin position="1"/>
        <end position="9" status="greater than"/>
    </location>
</feature>
<feature type="non-terminal residue">
    <location>
        <position position="9"/>
    </location>
</feature>
<sequence>GFPGKSLIF</sequence>
<comment type="subunit">
    <text>Homopentamer. Pentraxin (or pentaxin) have a discoid arrangement of 5 non-covalently bound subunits.</text>
</comment>
<comment type="subcellular location">
    <subcellularLocation>
        <location>Secreted</location>
    </subcellularLocation>
</comment>
<comment type="disease">
    <text>SAP is a precursor of amyloid component P which is found in basement membrane and associated with amyloid deposits.</text>
</comment>
<comment type="similarity">
    <text evidence="1">Belongs to the pentraxin family.</text>
</comment>
<accession>P19095</accession>
<protein>
    <recommendedName>
        <fullName>Serum amyloid P-component</fullName>
        <shortName>SAP</shortName>
    </recommendedName>
</protein>
<keyword id="KW-0034">Amyloid</keyword>
<keyword id="KW-0903">Direct protein sequencing</keyword>
<keyword id="KW-0430">Lectin</keyword>
<keyword id="KW-0964">Secreted</keyword>